<reference key="1">
    <citation type="journal article" date="1994" name="J. Biol. Chem.">
        <title>Comparison of myristoyl-CoA:protein N-myristoyltransferases from three pathogenic fungi: Cryptococcus neoformans, Histoplasma capsulatum, and Candida albicans.</title>
        <authorList>
            <person name="Lodge J.K."/>
            <person name="Johnson R.L."/>
            <person name="Weinberg R.A."/>
            <person name="Gordon J.I."/>
        </authorList>
    </citation>
    <scope>NUCLEOTIDE SEQUENCE [GENOMIC DNA]</scope>
    <scope>MYRISTOYLATION AT GLY-2</scope>
    <source>
        <strain>ATCC 26032 / G217B</strain>
    </source>
</reference>
<gene>
    <name type="primary">ARF</name>
</gene>
<sequence length="183" mass="20912">MGMAFSKLFDRIWGKKEMRILMVGLDAAGKTTILYKLKLGEIVTTIPTIGFNVETVEYKNIQFTVWDVGGQDKIRPLWRHYFQNTQGIIFVVDSNDRDRVVEAREELQRMLNEDELRDALLLVFANKQDLPNAMSPAEITQQLGLQSLTRRAWYIQSTCATTGDGLYEGLEWLANALKKAGHE</sequence>
<organism>
    <name type="scientific">Ajellomyces capsulatus</name>
    <name type="common">Darling's disease fungus</name>
    <name type="synonym">Histoplasma capsulatum</name>
    <dbReference type="NCBI Taxonomy" id="5037"/>
    <lineage>
        <taxon>Eukaryota</taxon>
        <taxon>Fungi</taxon>
        <taxon>Dikarya</taxon>
        <taxon>Ascomycota</taxon>
        <taxon>Pezizomycotina</taxon>
        <taxon>Eurotiomycetes</taxon>
        <taxon>Eurotiomycetidae</taxon>
        <taxon>Onygenales</taxon>
        <taxon>Ajellomycetaceae</taxon>
        <taxon>Histoplasma</taxon>
    </lineage>
</organism>
<dbReference type="EMBL" id="L25117">
    <property type="protein sequence ID" value="AAA17548.1"/>
    <property type="molecule type" value="Unassigned_DNA"/>
</dbReference>
<dbReference type="PIR" id="D49993">
    <property type="entry name" value="D49993"/>
</dbReference>
<dbReference type="SMR" id="P34727"/>
<dbReference type="iPTMnet" id="P34727"/>
<dbReference type="OMA" id="KEIRILX"/>
<dbReference type="GO" id="GO:0005794">
    <property type="term" value="C:Golgi apparatus"/>
    <property type="evidence" value="ECO:0007669"/>
    <property type="project" value="UniProtKB-SubCell"/>
</dbReference>
<dbReference type="GO" id="GO:0005525">
    <property type="term" value="F:GTP binding"/>
    <property type="evidence" value="ECO:0007669"/>
    <property type="project" value="UniProtKB-KW"/>
</dbReference>
<dbReference type="GO" id="GO:0003924">
    <property type="term" value="F:GTPase activity"/>
    <property type="evidence" value="ECO:0007669"/>
    <property type="project" value="InterPro"/>
</dbReference>
<dbReference type="GO" id="GO:0015031">
    <property type="term" value="P:protein transport"/>
    <property type="evidence" value="ECO:0007669"/>
    <property type="project" value="UniProtKB-KW"/>
</dbReference>
<dbReference type="GO" id="GO:0016192">
    <property type="term" value="P:vesicle-mediated transport"/>
    <property type="evidence" value="ECO:0007669"/>
    <property type="project" value="UniProtKB-KW"/>
</dbReference>
<dbReference type="CDD" id="cd04150">
    <property type="entry name" value="Arf1_5_like"/>
    <property type="match status" value="1"/>
</dbReference>
<dbReference type="FunFam" id="3.40.50.300:FF:000024">
    <property type="entry name" value="ADP-ribosylation factor 1"/>
    <property type="match status" value="1"/>
</dbReference>
<dbReference type="Gene3D" id="3.40.50.300">
    <property type="entry name" value="P-loop containing nucleotide triphosphate hydrolases"/>
    <property type="match status" value="1"/>
</dbReference>
<dbReference type="InterPro" id="IPR045872">
    <property type="entry name" value="Arf1-5-like"/>
</dbReference>
<dbReference type="InterPro" id="IPR027417">
    <property type="entry name" value="P-loop_NTPase"/>
</dbReference>
<dbReference type="InterPro" id="IPR005225">
    <property type="entry name" value="Small_GTP-bd"/>
</dbReference>
<dbReference type="InterPro" id="IPR024156">
    <property type="entry name" value="Small_GTPase_ARF"/>
</dbReference>
<dbReference type="InterPro" id="IPR006689">
    <property type="entry name" value="Small_GTPase_ARF/SAR"/>
</dbReference>
<dbReference type="NCBIfam" id="TIGR00231">
    <property type="entry name" value="small_GTP"/>
    <property type="match status" value="1"/>
</dbReference>
<dbReference type="PANTHER" id="PTHR11711">
    <property type="entry name" value="ADP RIBOSYLATION FACTOR-RELATED"/>
    <property type="match status" value="1"/>
</dbReference>
<dbReference type="Pfam" id="PF00025">
    <property type="entry name" value="Arf"/>
    <property type="match status" value="1"/>
</dbReference>
<dbReference type="PRINTS" id="PR00328">
    <property type="entry name" value="SAR1GTPBP"/>
</dbReference>
<dbReference type="SMART" id="SM00177">
    <property type="entry name" value="ARF"/>
    <property type="match status" value="1"/>
</dbReference>
<dbReference type="SMART" id="SM00175">
    <property type="entry name" value="RAB"/>
    <property type="match status" value="1"/>
</dbReference>
<dbReference type="SMART" id="SM00178">
    <property type="entry name" value="SAR"/>
    <property type="match status" value="1"/>
</dbReference>
<dbReference type="SUPFAM" id="SSF52540">
    <property type="entry name" value="P-loop containing nucleoside triphosphate hydrolases"/>
    <property type="match status" value="1"/>
</dbReference>
<dbReference type="PROSITE" id="PS51417">
    <property type="entry name" value="ARF"/>
    <property type="match status" value="1"/>
</dbReference>
<evidence type="ECO:0000250" key="1"/>
<evidence type="ECO:0000269" key="2">
    <source>
    </source>
</evidence>
<evidence type="ECO:0000305" key="3"/>
<feature type="initiator methionine" description="Removed">
    <location>
        <position position="1"/>
    </location>
</feature>
<feature type="chain" id="PRO_0000207410" description="ADP-ribosylation factor">
    <location>
        <begin position="2"/>
        <end position="183"/>
    </location>
</feature>
<feature type="binding site" evidence="1">
    <location>
        <begin position="24"/>
        <end position="31"/>
    </location>
    <ligand>
        <name>GTP</name>
        <dbReference type="ChEBI" id="CHEBI:37565"/>
    </ligand>
</feature>
<feature type="binding site" evidence="1">
    <location>
        <begin position="67"/>
        <end position="71"/>
    </location>
    <ligand>
        <name>GTP</name>
        <dbReference type="ChEBI" id="CHEBI:37565"/>
    </ligand>
</feature>
<feature type="binding site" evidence="1">
    <location>
        <begin position="126"/>
        <end position="129"/>
    </location>
    <ligand>
        <name>GTP</name>
        <dbReference type="ChEBI" id="CHEBI:37565"/>
    </ligand>
</feature>
<feature type="lipid moiety-binding region" description="N-myristoyl glycine" evidence="2">
    <location>
        <position position="2"/>
    </location>
</feature>
<proteinExistence type="evidence at protein level"/>
<comment type="function">
    <text>GTP-binding protein involved in protein trafficking; may modulate vesicle budding and uncoating within the Golgi apparatus.</text>
</comment>
<comment type="subcellular location">
    <subcellularLocation>
        <location>Golgi apparatus</location>
    </subcellularLocation>
</comment>
<comment type="similarity">
    <text evidence="3">Belongs to the small GTPase superfamily. Arf family.</text>
</comment>
<accession>P34727</accession>
<keyword id="KW-0931">ER-Golgi transport</keyword>
<keyword id="KW-0333">Golgi apparatus</keyword>
<keyword id="KW-0342">GTP-binding</keyword>
<keyword id="KW-0449">Lipoprotein</keyword>
<keyword id="KW-0519">Myristate</keyword>
<keyword id="KW-0547">Nucleotide-binding</keyword>
<keyword id="KW-0653">Protein transport</keyword>
<keyword id="KW-0813">Transport</keyword>
<protein>
    <recommendedName>
        <fullName>ADP-ribosylation factor</fullName>
    </recommendedName>
</protein>
<name>ARF_AJECA</name>